<proteinExistence type="inferred from homology"/>
<comment type="function">
    <text>An enzyme involved in the biosynthesis of bilin.</text>
</comment>
<comment type="similarity">
    <text evidence="1">Belongs to the CpcE/RpcE/PecE family.</text>
</comment>
<feature type="chain" id="PRO_0000199292" description="Bilin biosynthesis protein MpeU">
    <location>
        <begin position="1"/>
        <end position="297"/>
    </location>
</feature>
<dbReference type="EMBL" id="M95288">
    <property type="protein sequence ID" value="AAA27335.1"/>
    <property type="molecule type" value="Genomic_DNA"/>
</dbReference>
<dbReference type="PIR" id="B45045">
    <property type="entry name" value="B45045"/>
</dbReference>
<dbReference type="RefSeq" id="WP_048347962.1">
    <property type="nucleotide sequence ID" value="NZ_CP011941.1"/>
</dbReference>
<dbReference type="SMR" id="Q02177"/>
<dbReference type="STRING" id="32052.WB44_13685"/>
<dbReference type="GO" id="GO:0030089">
    <property type="term" value="C:phycobilisome"/>
    <property type="evidence" value="ECO:0007669"/>
    <property type="project" value="UniProtKB-KW"/>
</dbReference>
<dbReference type="GO" id="GO:0016491">
    <property type="term" value="F:oxidoreductase activity"/>
    <property type="evidence" value="ECO:0007669"/>
    <property type="project" value="TreeGrafter"/>
</dbReference>
<dbReference type="Gene3D" id="1.25.10.10">
    <property type="entry name" value="Leucine-rich Repeat Variant"/>
    <property type="match status" value="2"/>
</dbReference>
<dbReference type="InterPro" id="IPR011989">
    <property type="entry name" value="ARM-like"/>
</dbReference>
<dbReference type="InterPro" id="IPR016024">
    <property type="entry name" value="ARM-type_fold"/>
</dbReference>
<dbReference type="InterPro" id="IPR004155">
    <property type="entry name" value="PBS_lyase_HEAT"/>
</dbReference>
<dbReference type="PANTHER" id="PTHR12697:SF5">
    <property type="entry name" value="DEOXYHYPUSINE HYDROXYLASE"/>
    <property type="match status" value="1"/>
</dbReference>
<dbReference type="PANTHER" id="PTHR12697">
    <property type="entry name" value="PBS LYASE HEAT-LIKE PROTEIN"/>
    <property type="match status" value="1"/>
</dbReference>
<dbReference type="Pfam" id="PF13646">
    <property type="entry name" value="HEAT_2"/>
    <property type="match status" value="2"/>
</dbReference>
<dbReference type="SMART" id="SM00567">
    <property type="entry name" value="EZ_HEAT"/>
    <property type="match status" value="5"/>
</dbReference>
<dbReference type="SUPFAM" id="SSF48371">
    <property type="entry name" value="ARM repeat"/>
    <property type="match status" value="1"/>
</dbReference>
<evidence type="ECO:0000305" key="1"/>
<organism>
    <name type="scientific">Synechococcus sp. (strain WH8020)</name>
    <dbReference type="NCBI Taxonomy" id="32052"/>
    <lineage>
        <taxon>Bacteria</taxon>
        <taxon>Bacillati</taxon>
        <taxon>Cyanobacteriota</taxon>
        <taxon>Cyanophyceae</taxon>
        <taxon>Synechococcales</taxon>
        <taxon>Synechococcaceae</taxon>
        <taxon>Synechococcus</taxon>
    </lineage>
</organism>
<keyword id="KW-0042">Antenna complex</keyword>
<keyword id="KW-0605">Phycobilisome</keyword>
<protein>
    <recommendedName>
        <fullName>Bilin biosynthesis protein MpeU</fullName>
    </recommendedName>
</protein>
<reference key="1">
    <citation type="journal article" date="1993" name="Plant Mol. Biol.">
        <title>Genes of the R-phycocyanin II locus of marine Synechococcus spp., and comparison of protein-chromophore interactions in phycocyanins differing in bilin composition.</title>
        <authorList>
            <person name="de Lorimier R."/>
            <person name="Wilbanks S.M."/>
            <person name="Glazer A.N."/>
        </authorList>
    </citation>
    <scope>NUCLEOTIDE SEQUENCE [GENOMIC DNA]</scope>
</reference>
<reference key="2">
    <citation type="journal article" date="1993" name="J. Biol. Chem.">
        <title>Rod structure of a phycoerythrin II-containing phycobilisome. I. Organization and sequence of the gene cluster encoding the major phycobiliprotein rod components in the genome of marine Synechococcus sp. WH8020.</title>
        <authorList>
            <person name="Wilbanks S.M."/>
            <person name="Glazer A.N."/>
        </authorList>
    </citation>
    <scope>NUCLEOTIDE SEQUENCE [GENOMIC DNA]</scope>
</reference>
<accession>Q02177</accession>
<name>MPEU_SYNPY</name>
<gene>
    <name type="primary">mpeU</name>
</gene>
<sequence>MTGINSQQEDIKIETLTQEEALELATALKQKLSHGELPNSDLESINKMVAGLGDNRGELRLTFAKSLGSIGEDAIPILCEALKNSSNVVIRRASAKTLNIIGNKKALPNLIEAFESDEDPVVQGSSAGAMATIGEPAIEPLLRILTESNCTAFQIGLINLALGFIGSKGPMGFNSAISSKNPEIRIAALNALAEQAQKSENKDVQALILNALKDQDSEVRAEAAIIVGKSMDQEEGAHQLHELLKDKNDQVRKNAALSLMKMEAVISIDFLDRAIRQESDEQVKGVMIVARNQLMKH</sequence>